<proteinExistence type="inferred from homology"/>
<name>RL13_METNO</name>
<accession>B8IUE9</accession>
<sequence length="153" mass="17303">MKTFSLKPADVEKKWVIIDAEGLVVGRLASIVAMRLRGKHKPQYTPHVDCGDNVIVINADKVKFTGRKYDQKVYYHHTGYPGGIKERSAKFILEGRFPERVVEKAVERMLPRGPLFRKILGNLRVYKGSEHPHAAQQPETLDVAALNRKNVSA</sequence>
<organism>
    <name type="scientific">Methylobacterium nodulans (strain LMG 21967 / CNCM I-2342 / ORS 2060)</name>
    <dbReference type="NCBI Taxonomy" id="460265"/>
    <lineage>
        <taxon>Bacteria</taxon>
        <taxon>Pseudomonadati</taxon>
        <taxon>Pseudomonadota</taxon>
        <taxon>Alphaproteobacteria</taxon>
        <taxon>Hyphomicrobiales</taxon>
        <taxon>Methylobacteriaceae</taxon>
        <taxon>Methylobacterium</taxon>
    </lineage>
</organism>
<gene>
    <name evidence="1" type="primary">rplM</name>
    <name type="ordered locus">Mnod_0148</name>
</gene>
<comment type="function">
    <text evidence="1">This protein is one of the early assembly proteins of the 50S ribosomal subunit, although it is not seen to bind rRNA by itself. It is important during the early stages of 50S assembly.</text>
</comment>
<comment type="subunit">
    <text evidence="1">Part of the 50S ribosomal subunit.</text>
</comment>
<comment type="similarity">
    <text evidence="1">Belongs to the universal ribosomal protein uL13 family.</text>
</comment>
<dbReference type="EMBL" id="CP001349">
    <property type="protein sequence ID" value="ACL55194.1"/>
    <property type="molecule type" value="Genomic_DNA"/>
</dbReference>
<dbReference type="RefSeq" id="WP_015926907.1">
    <property type="nucleotide sequence ID" value="NC_011894.1"/>
</dbReference>
<dbReference type="SMR" id="B8IUE9"/>
<dbReference type="STRING" id="460265.Mnod_0148"/>
<dbReference type="KEGG" id="mno:Mnod_0148"/>
<dbReference type="eggNOG" id="COG0102">
    <property type="taxonomic scope" value="Bacteria"/>
</dbReference>
<dbReference type="HOGENOM" id="CLU_082184_2_0_5"/>
<dbReference type="OrthoDB" id="9801330at2"/>
<dbReference type="Proteomes" id="UP000008207">
    <property type="component" value="Chromosome"/>
</dbReference>
<dbReference type="GO" id="GO:0022625">
    <property type="term" value="C:cytosolic large ribosomal subunit"/>
    <property type="evidence" value="ECO:0007669"/>
    <property type="project" value="TreeGrafter"/>
</dbReference>
<dbReference type="GO" id="GO:0003729">
    <property type="term" value="F:mRNA binding"/>
    <property type="evidence" value="ECO:0007669"/>
    <property type="project" value="TreeGrafter"/>
</dbReference>
<dbReference type="GO" id="GO:0003735">
    <property type="term" value="F:structural constituent of ribosome"/>
    <property type="evidence" value="ECO:0007669"/>
    <property type="project" value="InterPro"/>
</dbReference>
<dbReference type="GO" id="GO:0017148">
    <property type="term" value="P:negative regulation of translation"/>
    <property type="evidence" value="ECO:0007669"/>
    <property type="project" value="TreeGrafter"/>
</dbReference>
<dbReference type="GO" id="GO:0006412">
    <property type="term" value="P:translation"/>
    <property type="evidence" value="ECO:0007669"/>
    <property type="project" value="UniProtKB-UniRule"/>
</dbReference>
<dbReference type="CDD" id="cd00392">
    <property type="entry name" value="Ribosomal_L13"/>
    <property type="match status" value="1"/>
</dbReference>
<dbReference type="FunFam" id="3.90.1180.10:FF:000001">
    <property type="entry name" value="50S ribosomal protein L13"/>
    <property type="match status" value="1"/>
</dbReference>
<dbReference type="Gene3D" id="3.90.1180.10">
    <property type="entry name" value="Ribosomal protein L13"/>
    <property type="match status" value="1"/>
</dbReference>
<dbReference type="HAMAP" id="MF_01366">
    <property type="entry name" value="Ribosomal_uL13"/>
    <property type="match status" value="1"/>
</dbReference>
<dbReference type="InterPro" id="IPR005822">
    <property type="entry name" value="Ribosomal_uL13"/>
</dbReference>
<dbReference type="InterPro" id="IPR005823">
    <property type="entry name" value="Ribosomal_uL13_bac-type"/>
</dbReference>
<dbReference type="InterPro" id="IPR036899">
    <property type="entry name" value="Ribosomal_uL13_sf"/>
</dbReference>
<dbReference type="NCBIfam" id="TIGR01066">
    <property type="entry name" value="rplM_bact"/>
    <property type="match status" value="1"/>
</dbReference>
<dbReference type="PANTHER" id="PTHR11545:SF2">
    <property type="entry name" value="LARGE RIBOSOMAL SUBUNIT PROTEIN UL13M"/>
    <property type="match status" value="1"/>
</dbReference>
<dbReference type="PANTHER" id="PTHR11545">
    <property type="entry name" value="RIBOSOMAL PROTEIN L13"/>
    <property type="match status" value="1"/>
</dbReference>
<dbReference type="Pfam" id="PF00572">
    <property type="entry name" value="Ribosomal_L13"/>
    <property type="match status" value="1"/>
</dbReference>
<dbReference type="PIRSF" id="PIRSF002181">
    <property type="entry name" value="Ribosomal_L13"/>
    <property type="match status" value="1"/>
</dbReference>
<dbReference type="SUPFAM" id="SSF52161">
    <property type="entry name" value="Ribosomal protein L13"/>
    <property type="match status" value="1"/>
</dbReference>
<protein>
    <recommendedName>
        <fullName evidence="1">Large ribosomal subunit protein uL13</fullName>
    </recommendedName>
    <alternativeName>
        <fullName evidence="2">50S ribosomal protein L13</fullName>
    </alternativeName>
</protein>
<reference key="1">
    <citation type="submission" date="2009-01" db="EMBL/GenBank/DDBJ databases">
        <title>Complete sequence of chromosome of Methylobacterium nodulans ORS 2060.</title>
        <authorList>
            <consortium name="US DOE Joint Genome Institute"/>
            <person name="Lucas S."/>
            <person name="Copeland A."/>
            <person name="Lapidus A."/>
            <person name="Glavina del Rio T."/>
            <person name="Dalin E."/>
            <person name="Tice H."/>
            <person name="Bruce D."/>
            <person name="Goodwin L."/>
            <person name="Pitluck S."/>
            <person name="Sims D."/>
            <person name="Brettin T."/>
            <person name="Detter J.C."/>
            <person name="Han C."/>
            <person name="Larimer F."/>
            <person name="Land M."/>
            <person name="Hauser L."/>
            <person name="Kyrpides N."/>
            <person name="Ivanova N."/>
            <person name="Marx C.J."/>
            <person name="Richardson P."/>
        </authorList>
    </citation>
    <scope>NUCLEOTIDE SEQUENCE [LARGE SCALE GENOMIC DNA]</scope>
    <source>
        <strain>LMG 21967 / CNCM I-2342 / ORS 2060</strain>
    </source>
</reference>
<feature type="chain" id="PRO_1000166875" description="Large ribosomal subunit protein uL13">
    <location>
        <begin position="1"/>
        <end position="153"/>
    </location>
</feature>
<keyword id="KW-1185">Reference proteome</keyword>
<keyword id="KW-0687">Ribonucleoprotein</keyword>
<keyword id="KW-0689">Ribosomal protein</keyword>
<evidence type="ECO:0000255" key="1">
    <source>
        <dbReference type="HAMAP-Rule" id="MF_01366"/>
    </source>
</evidence>
<evidence type="ECO:0000305" key="2"/>